<gene>
    <name evidence="1" type="primary">rlmH</name>
    <name type="ordered locus">MCAP_0548</name>
</gene>
<accession>Q2SRU4</accession>
<protein>
    <recommendedName>
        <fullName evidence="1">Ribosomal RNA large subunit methyltransferase H</fullName>
        <ecNumber evidence="1">2.1.1.177</ecNumber>
    </recommendedName>
    <alternativeName>
        <fullName evidence="1">23S rRNA (pseudouridine1915-N3)-methyltransferase</fullName>
    </alternativeName>
    <alternativeName>
        <fullName evidence="1">23S rRNA m3Psi1915 methyltransferase</fullName>
    </alternativeName>
    <alternativeName>
        <fullName evidence="1">rRNA (pseudouridine-N3-)-methyltransferase RlmH</fullName>
    </alternativeName>
</protein>
<evidence type="ECO:0000255" key="1">
    <source>
        <dbReference type="HAMAP-Rule" id="MF_00658"/>
    </source>
</evidence>
<feature type="chain" id="PRO_0000260572" description="Ribosomal RNA large subunit methyltransferase H">
    <location>
        <begin position="1"/>
        <end position="155"/>
    </location>
</feature>
<feature type="binding site" evidence="1">
    <location>
        <position position="72"/>
    </location>
    <ligand>
        <name>S-adenosyl-L-methionine</name>
        <dbReference type="ChEBI" id="CHEBI:59789"/>
    </ligand>
</feature>
<feature type="binding site" evidence="1">
    <location>
        <position position="104"/>
    </location>
    <ligand>
        <name>S-adenosyl-L-methionine</name>
        <dbReference type="ChEBI" id="CHEBI:59789"/>
    </ligand>
</feature>
<feature type="binding site" evidence="1">
    <location>
        <begin position="123"/>
        <end position="128"/>
    </location>
    <ligand>
        <name>S-adenosyl-L-methionine</name>
        <dbReference type="ChEBI" id="CHEBI:59789"/>
    </ligand>
</feature>
<organism>
    <name type="scientific">Mycoplasma capricolum subsp. capricolum (strain California kid / ATCC 27343 / NCTC 10154)</name>
    <dbReference type="NCBI Taxonomy" id="340047"/>
    <lineage>
        <taxon>Bacteria</taxon>
        <taxon>Bacillati</taxon>
        <taxon>Mycoplasmatota</taxon>
        <taxon>Mollicutes</taxon>
        <taxon>Mycoplasmataceae</taxon>
        <taxon>Mycoplasma</taxon>
    </lineage>
</organism>
<comment type="function">
    <text evidence="1">Specifically methylates the pseudouridine at position 1915 (m3Psi1915) in 23S rRNA.</text>
</comment>
<comment type="catalytic activity">
    <reaction evidence="1">
        <text>pseudouridine(1915) in 23S rRNA + S-adenosyl-L-methionine = N(3)-methylpseudouridine(1915) in 23S rRNA + S-adenosyl-L-homocysteine + H(+)</text>
        <dbReference type="Rhea" id="RHEA:42752"/>
        <dbReference type="Rhea" id="RHEA-COMP:10221"/>
        <dbReference type="Rhea" id="RHEA-COMP:10222"/>
        <dbReference type="ChEBI" id="CHEBI:15378"/>
        <dbReference type="ChEBI" id="CHEBI:57856"/>
        <dbReference type="ChEBI" id="CHEBI:59789"/>
        <dbReference type="ChEBI" id="CHEBI:65314"/>
        <dbReference type="ChEBI" id="CHEBI:74486"/>
        <dbReference type="EC" id="2.1.1.177"/>
    </reaction>
</comment>
<comment type="subunit">
    <text evidence="1">Homodimer.</text>
</comment>
<comment type="subcellular location">
    <subcellularLocation>
        <location evidence="1">Cytoplasm</location>
    </subcellularLocation>
</comment>
<comment type="similarity">
    <text evidence="1">Belongs to the RNA methyltransferase RlmH family.</text>
</comment>
<dbReference type="EC" id="2.1.1.177" evidence="1"/>
<dbReference type="EMBL" id="CP000123">
    <property type="protein sequence ID" value="ABC01555.1"/>
    <property type="molecule type" value="Genomic_DNA"/>
</dbReference>
<dbReference type="RefSeq" id="WP_011387417.1">
    <property type="nucleotide sequence ID" value="NC_007633.1"/>
</dbReference>
<dbReference type="SMR" id="Q2SRU4"/>
<dbReference type="GeneID" id="23778495"/>
<dbReference type="KEGG" id="mcp:MCAP_0548"/>
<dbReference type="HOGENOM" id="CLU_100552_0_0_14"/>
<dbReference type="PhylomeDB" id="Q2SRU4"/>
<dbReference type="Proteomes" id="UP000001928">
    <property type="component" value="Chromosome"/>
</dbReference>
<dbReference type="GO" id="GO:0005737">
    <property type="term" value="C:cytoplasm"/>
    <property type="evidence" value="ECO:0007669"/>
    <property type="project" value="UniProtKB-SubCell"/>
</dbReference>
<dbReference type="GO" id="GO:0070038">
    <property type="term" value="F:rRNA (pseudouridine-N3-)-methyltransferase activity"/>
    <property type="evidence" value="ECO:0007669"/>
    <property type="project" value="UniProtKB-UniRule"/>
</dbReference>
<dbReference type="CDD" id="cd18081">
    <property type="entry name" value="RlmH-like"/>
    <property type="match status" value="1"/>
</dbReference>
<dbReference type="Gene3D" id="3.40.1280.10">
    <property type="match status" value="1"/>
</dbReference>
<dbReference type="HAMAP" id="MF_00658">
    <property type="entry name" value="23SrRNA_methyltr_H"/>
    <property type="match status" value="1"/>
</dbReference>
<dbReference type="InterPro" id="IPR029028">
    <property type="entry name" value="Alpha/beta_knot_MTases"/>
</dbReference>
<dbReference type="InterPro" id="IPR003742">
    <property type="entry name" value="RlmH-like"/>
</dbReference>
<dbReference type="InterPro" id="IPR029026">
    <property type="entry name" value="tRNA_m1G_MTases_N"/>
</dbReference>
<dbReference type="PANTHER" id="PTHR33603">
    <property type="entry name" value="METHYLTRANSFERASE"/>
    <property type="match status" value="1"/>
</dbReference>
<dbReference type="PANTHER" id="PTHR33603:SF1">
    <property type="entry name" value="RIBOSOMAL RNA LARGE SUBUNIT METHYLTRANSFERASE H"/>
    <property type="match status" value="1"/>
</dbReference>
<dbReference type="Pfam" id="PF02590">
    <property type="entry name" value="SPOUT_MTase"/>
    <property type="match status" value="1"/>
</dbReference>
<dbReference type="PIRSF" id="PIRSF004505">
    <property type="entry name" value="MT_bac"/>
    <property type="match status" value="1"/>
</dbReference>
<dbReference type="SUPFAM" id="SSF75217">
    <property type="entry name" value="alpha/beta knot"/>
    <property type="match status" value="1"/>
</dbReference>
<proteinExistence type="inferred from homology"/>
<sequence>MKIKIICFGKLDKAFYVDAFNDYFKRLKKYVDLEIIELKEEINGELNKIKDENSNLLLKKLENYKDFEKIILDVNSKLISTENLVEIIKTNLNYKTAKILFVIGPSDGYSKSFLNSFTNKFSLAKITLPHQLCRIVLIEQIYRVFKIINNEKYHK</sequence>
<keyword id="KW-0963">Cytoplasm</keyword>
<keyword id="KW-0489">Methyltransferase</keyword>
<keyword id="KW-0698">rRNA processing</keyword>
<keyword id="KW-0949">S-adenosyl-L-methionine</keyword>
<keyword id="KW-0808">Transferase</keyword>
<name>RLMH_MYCCT</name>
<reference key="1">
    <citation type="submission" date="2005-09" db="EMBL/GenBank/DDBJ databases">
        <authorList>
            <person name="Glass J.I."/>
            <person name="Lartigue C."/>
            <person name="Pfannkoch C."/>
            <person name="Baden-Tillson H."/>
            <person name="Smith H.O."/>
            <person name="Venter J.C."/>
            <person name="Roske K."/>
            <person name="Wise K.S."/>
            <person name="Calcutt M.J."/>
            <person name="Nelson W.C."/>
            <person name="Nierman W.C."/>
        </authorList>
    </citation>
    <scope>NUCLEOTIDE SEQUENCE [LARGE SCALE GENOMIC DNA]</scope>
    <source>
        <strain>California kid / ATCC 27343 / NCTC 10154</strain>
    </source>
</reference>